<dbReference type="EC" id="2.7.1.39" evidence="1"/>
<dbReference type="EMBL" id="AE009439">
    <property type="protein sequence ID" value="AAM01548.1"/>
    <property type="molecule type" value="Genomic_DNA"/>
</dbReference>
<dbReference type="SMR" id="Q8TYG6"/>
<dbReference type="FunCoup" id="Q8TYG6">
    <property type="interactions" value="120"/>
</dbReference>
<dbReference type="STRING" id="190192.MK0333"/>
<dbReference type="PaxDb" id="190192-MK0333"/>
<dbReference type="EnsemblBacteria" id="AAM01548">
    <property type="protein sequence ID" value="AAM01548"/>
    <property type="gene ID" value="MK0333"/>
</dbReference>
<dbReference type="KEGG" id="mka:MK0333"/>
<dbReference type="PATRIC" id="fig|190192.8.peg.354"/>
<dbReference type="HOGENOM" id="CLU_041243_1_1_2"/>
<dbReference type="InParanoid" id="Q8TYG6"/>
<dbReference type="UniPathway" id="UPA00050">
    <property type="reaction ID" value="UER00064"/>
</dbReference>
<dbReference type="Proteomes" id="UP000001826">
    <property type="component" value="Chromosome"/>
</dbReference>
<dbReference type="GO" id="GO:0005737">
    <property type="term" value="C:cytoplasm"/>
    <property type="evidence" value="ECO:0007669"/>
    <property type="project" value="UniProtKB-SubCell"/>
</dbReference>
<dbReference type="GO" id="GO:0005524">
    <property type="term" value="F:ATP binding"/>
    <property type="evidence" value="ECO:0007669"/>
    <property type="project" value="UniProtKB-UniRule"/>
</dbReference>
<dbReference type="GO" id="GO:0004413">
    <property type="term" value="F:homoserine kinase activity"/>
    <property type="evidence" value="ECO:0007669"/>
    <property type="project" value="UniProtKB-UniRule"/>
</dbReference>
<dbReference type="GO" id="GO:0009088">
    <property type="term" value="P:threonine biosynthetic process"/>
    <property type="evidence" value="ECO:0007669"/>
    <property type="project" value="UniProtKB-UniRule"/>
</dbReference>
<dbReference type="Gene3D" id="3.30.230.10">
    <property type="match status" value="1"/>
</dbReference>
<dbReference type="Gene3D" id="3.30.70.890">
    <property type="entry name" value="GHMP kinase, C-terminal domain"/>
    <property type="match status" value="1"/>
</dbReference>
<dbReference type="HAMAP" id="MF_00384">
    <property type="entry name" value="Homoser_kinase"/>
    <property type="match status" value="1"/>
</dbReference>
<dbReference type="InterPro" id="IPR013750">
    <property type="entry name" value="GHMP_kinase_C_dom"/>
</dbReference>
<dbReference type="InterPro" id="IPR036554">
    <property type="entry name" value="GHMP_kinase_C_sf"/>
</dbReference>
<dbReference type="InterPro" id="IPR006204">
    <property type="entry name" value="GHMP_kinase_N_dom"/>
</dbReference>
<dbReference type="InterPro" id="IPR006203">
    <property type="entry name" value="GHMP_knse_ATP-bd_CS"/>
</dbReference>
<dbReference type="InterPro" id="IPR000870">
    <property type="entry name" value="Homoserine_kinase"/>
</dbReference>
<dbReference type="InterPro" id="IPR020568">
    <property type="entry name" value="Ribosomal_Su5_D2-typ_SF"/>
</dbReference>
<dbReference type="InterPro" id="IPR014721">
    <property type="entry name" value="Ribsml_uS5_D2-typ_fold_subgr"/>
</dbReference>
<dbReference type="NCBIfam" id="NF002288">
    <property type="entry name" value="PRK01212.1-4"/>
    <property type="match status" value="1"/>
</dbReference>
<dbReference type="NCBIfam" id="TIGR00191">
    <property type="entry name" value="thrB"/>
    <property type="match status" value="1"/>
</dbReference>
<dbReference type="PANTHER" id="PTHR20861:SF1">
    <property type="entry name" value="HOMOSERINE KINASE"/>
    <property type="match status" value="1"/>
</dbReference>
<dbReference type="PANTHER" id="PTHR20861">
    <property type="entry name" value="HOMOSERINE/4-DIPHOSPHOCYTIDYL-2-C-METHYL-D-ERYTHRITOL KINASE"/>
    <property type="match status" value="1"/>
</dbReference>
<dbReference type="Pfam" id="PF08544">
    <property type="entry name" value="GHMP_kinases_C"/>
    <property type="match status" value="1"/>
</dbReference>
<dbReference type="Pfam" id="PF00288">
    <property type="entry name" value="GHMP_kinases_N"/>
    <property type="match status" value="1"/>
</dbReference>
<dbReference type="PIRSF" id="PIRSF000676">
    <property type="entry name" value="Homoser_kin"/>
    <property type="match status" value="1"/>
</dbReference>
<dbReference type="PRINTS" id="PR00958">
    <property type="entry name" value="HOMSERKINASE"/>
</dbReference>
<dbReference type="SUPFAM" id="SSF55060">
    <property type="entry name" value="GHMP Kinase, C-terminal domain"/>
    <property type="match status" value="1"/>
</dbReference>
<dbReference type="SUPFAM" id="SSF54211">
    <property type="entry name" value="Ribosomal protein S5 domain 2-like"/>
    <property type="match status" value="1"/>
</dbReference>
<dbReference type="PROSITE" id="PS00627">
    <property type="entry name" value="GHMP_KINASES_ATP"/>
    <property type="match status" value="1"/>
</dbReference>
<gene>
    <name evidence="1" type="primary">thrB</name>
    <name type="ordered locus">MK0333</name>
</gene>
<keyword id="KW-0028">Amino-acid biosynthesis</keyword>
<keyword id="KW-0067">ATP-binding</keyword>
<keyword id="KW-0963">Cytoplasm</keyword>
<keyword id="KW-0418">Kinase</keyword>
<keyword id="KW-0547">Nucleotide-binding</keyword>
<keyword id="KW-1185">Reference proteome</keyword>
<keyword id="KW-0791">Threonine biosynthesis</keyword>
<keyword id="KW-0808">Transferase</keyword>
<protein>
    <recommendedName>
        <fullName evidence="1">Homoserine kinase</fullName>
        <shortName evidence="1">HK</shortName>
        <shortName evidence="1">HSK</shortName>
        <ecNumber evidence="1">2.7.1.39</ecNumber>
    </recommendedName>
</protein>
<proteinExistence type="inferred from homology"/>
<organism>
    <name type="scientific">Methanopyrus kandleri (strain AV19 / DSM 6324 / JCM 9639 / NBRC 100938)</name>
    <dbReference type="NCBI Taxonomy" id="190192"/>
    <lineage>
        <taxon>Archaea</taxon>
        <taxon>Methanobacteriati</taxon>
        <taxon>Methanobacteriota</taxon>
        <taxon>Methanomada group</taxon>
        <taxon>Methanopyri</taxon>
        <taxon>Methanopyrales</taxon>
        <taxon>Methanopyraceae</taxon>
        <taxon>Methanopyrus</taxon>
    </lineage>
</organism>
<reference key="1">
    <citation type="journal article" date="2002" name="Proc. Natl. Acad. Sci. U.S.A.">
        <title>The complete genome of hyperthermophile Methanopyrus kandleri AV19 and monophyly of archaeal methanogens.</title>
        <authorList>
            <person name="Slesarev A.I."/>
            <person name="Mezhevaya K.V."/>
            <person name="Makarova K.S."/>
            <person name="Polushin N.N."/>
            <person name="Shcherbinina O.V."/>
            <person name="Shakhova V.V."/>
            <person name="Belova G.I."/>
            <person name="Aravind L."/>
            <person name="Natale D.A."/>
            <person name="Rogozin I.B."/>
            <person name="Tatusov R.L."/>
            <person name="Wolf Y.I."/>
            <person name="Stetter K.O."/>
            <person name="Malykh A.G."/>
            <person name="Koonin E.V."/>
            <person name="Kozyavkin S.A."/>
        </authorList>
    </citation>
    <scope>NUCLEOTIDE SEQUENCE [LARGE SCALE GENOMIC DNA]</scope>
    <source>
        <strain>AV19 / DSM 6324 / JCM 9639 / NBRC 100938</strain>
    </source>
</reference>
<comment type="function">
    <text evidence="1">Catalyzes the ATP-dependent phosphorylation of L-homoserine to L-homoserine phosphate.</text>
</comment>
<comment type="catalytic activity">
    <reaction evidence="1">
        <text>L-homoserine + ATP = O-phospho-L-homoserine + ADP + H(+)</text>
        <dbReference type="Rhea" id="RHEA:13985"/>
        <dbReference type="ChEBI" id="CHEBI:15378"/>
        <dbReference type="ChEBI" id="CHEBI:30616"/>
        <dbReference type="ChEBI" id="CHEBI:57476"/>
        <dbReference type="ChEBI" id="CHEBI:57590"/>
        <dbReference type="ChEBI" id="CHEBI:456216"/>
        <dbReference type="EC" id="2.7.1.39"/>
    </reaction>
</comment>
<comment type="pathway">
    <text evidence="1">Amino-acid biosynthesis; L-threonine biosynthesis; L-threonine from L-aspartate: step 4/5.</text>
</comment>
<comment type="subcellular location">
    <subcellularLocation>
        <location evidence="1">Cytoplasm</location>
    </subcellularLocation>
</comment>
<comment type="similarity">
    <text evidence="1">Belongs to the GHMP kinase family. Homoserine kinase subfamily.</text>
</comment>
<feature type="chain" id="PRO_0000156642" description="Homoserine kinase">
    <location>
        <begin position="1"/>
        <end position="298"/>
    </location>
</feature>
<feature type="binding site" evidence="1">
    <location>
        <begin position="85"/>
        <end position="95"/>
    </location>
    <ligand>
        <name>ATP</name>
        <dbReference type="ChEBI" id="CHEBI:30616"/>
    </ligand>
</feature>
<sequence>MTPLSTVVRAPATIANVGPGFDVFGLAVDGFHDVVEAHEADGVRIVTEDPIPTDPERNTAGRVALRMVEEFDLPGVSLEIRKGVPMGGLGSSAASAVAAAVAIDREFELGLEESELLRFAAEGERAAAGEPHYDNVAPCLLGGFVIWRFEREYVRLEVPGDLRFVTVTPTGVRVTTEEARKALRERPPSLDDVVNNLSAVALMVHALHEEDAETFARMVGWDRISEPVRKRFVPRYRELRETAYGTGALGFAISGAGPTVFAVCWREDAEDVRTALEDVLDGKCVSAVHRVSDGAEVA</sequence>
<evidence type="ECO:0000255" key="1">
    <source>
        <dbReference type="HAMAP-Rule" id="MF_00384"/>
    </source>
</evidence>
<accession>Q8TYG6</accession>
<name>KHSE_METKA</name>